<proteinExistence type="inferred from homology"/>
<name>GLGA_PHOPR</name>
<reference key="1">
    <citation type="journal article" date="2005" name="Science">
        <title>Life at depth: Photobacterium profundum genome sequence and expression analysis.</title>
        <authorList>
            <person name="Vezzi A."/>
            <person name="Campanaro S."/>
            <person name="D'Angelo M."/>
            <person name="Simonato F."/>
            <person name="Vitulo N."/>
            <person name="Lauro F.M."/>
            <person name="Cestaro A."/>
            <person name="Malacrida G."/>
            <person name="Simionati B."/>
            <person name="Cannata N."/>
            <person name="Romualdi C."/>
            <person name="Bartlett D.H."/>
            <person name="Valle G."/>
        </authorList>
    </citation>
    <scope>NUCLEOTIDE SEQUENCE [LARGE SCALE GENOMIC DNA]</scope>
    <source>
        <strain>ATCC BAA-1253 / SS9</strain>
    </source>
</reference>
<comment type="function">
    <text evidence="1">Synthesizes alpha-1,4-glucan chains using ADP-glucose.</text>
</comment>
<comment type="catalytic activity">
    <reaction evidence="1">
        <text>[(1-&gt;4)-alpha-D-glucosyl](n) + ADP-alpha-D-glucose = [(1-&gt;4)-alpha-D-glucosyl](n+1) + ADP + H(+)</text>
        <dbReference type="Rhea" id="RHEA:18189"/>
        <dbReference type="Rhea" id="RHEA-COMP:9584"/>
        <dbReference type="Rhea" id="RHEA-COMP:9587"/>
        <dbReference type="ChEBI" id="CHEBI:15378"/>
        <dbReference type="ChEBI" id="CHEBI:15444"/>
        <dbReference type="ChEBI" id="CHEBI:57498"/>
        <dbReference type="ChEBI" id="CHEBI:456216"/>
        <dbReference type="EC" id="2.4.1.21"/>
    </reaction>
</comment>
<comment type="pathway">
    <text evidence="1">Glycan biosynthesis; glycogen biosynthesis.</text>
</comment>
<comment type="similarity">
    <text evidence="1">Belongs to the glycosyltransferase 1 family. Bacterial/plant glycogen synthase subfamily.</text>
</comment>
<evidence type="ECO:0000255" key="1">
    <source>
        <dbReference type="HAMAP-Rule" id="MF_00484"/>
    </source>
</evidence>
<dbReference type="EC" id="2.4.1.21" evidence="1"/>
<dbReference type="EMBL" id="CR378676">
    <property type="protein sequence ID" value="CAG22279.1"/>
    <property type="molecule type" value="Genomic_DNA"/>
</dbReference>
<dbReference type="RefSeq" id="WP_011220490.1">
    <property type="nucleotide sequence ID" value="NC_006371.1"/>
</dbReference>
<dbReference type="SMR" id="Q6LKA1"/>
<dbReference type="STRING" id="298386.PBPRB0406"/>
<dbReference type="CAZy" id="GT5">
    <property type="family name" value="Glycosyltransferase Family 5"/>
</dbReference>
<dbReference type="KEGG" id="ppr:PBPRB0406"/>
<dbReference type="eggNOG" id="COG0297">
    <property type="taxonomic scope" value="Bacteria"/>
</dbReference>
<dbReference type="HOGENOM" id="CLU_009583_18_2_6"/>
<dbReference type="UniPathway" id="UPA00164"/>
<dbReference type="Proteomes" id="UP000000593">
    <property type="component" value="Chromosome 2"/>
</dbReference>
<dbReference type="GO" id="GO:0005829">
    <property type="term" value="C:cytosol"/>
    <property type="evidence" value="ECO:0007669"/>
    <property type="project" value="TreeGrafter"/>
</dbReference>
<dbReference type="GO" id="GO:0009011">
    <property type="term" value="F:alpha-1,4-glucan glucosyltransferase (ADP-glucose donor) activity"/>
    <property type="evidence" value="ECO:0007669"/>
    <property type="project" value="UniProtKB-UniRule"/>
</dbReference>
<dbReference type="GO" id="GO:0004373">
    <property type="term" value="F:alpha-1,4-glucan glucosyltransferase (UDP-glucose donor) activity"/>
    <property type="evidence" value="ECO:0007669"/>
    <property type="project" value="InterPro"/>
</dbReference>
<dbReference type="GO" id="GO:0005978">
    <property type="term" value="P:glycogen biosynthetic process"/>
    <property type="evidence" value="ECO:0007669"/>
    <property type="project" value="UniProtKB-UniRule"/>
</dbReference>
<dbReference type="CDD" id="cd03791">
    <property type="entry name" value="GT5_Glycogen_synthase_DULL1-like"/>
    <property type="match status" value="1"/>
</dbReference>
<dbReference type="Gene3D" id="3.40.50.2000">
    <property type="entry name" value="Glycogen Phosphorylase B"/>
    <property type="match status" value="2"/>
</dbReference>
<dbReference type="HAMAP" id="MF_00484">
    <property type="entry name" value="Glycogen_synth"/>
    <property type="match status" value="1"/>
</dbReference>
<dbReference type="InterPro" id="IPR001296">
    <property type="entry name" value="Glyco_trans_1"/>
</dbReference>
<dbReference type="InterPro" id="IPR011835">
    <property type="entry name" value="GS/SS"/>
</dbReference>
<dbReference type="InterPro" id="IPR013534">
    <property type="entry name" value="Starch_synth_cat_dom"/>
</dbReference>
<dbReference type="NCBIfam" id="TIGR02095">
    <property type="entry name" value="glgA"/>
    <property type="match status" value="1"/>
</dbReference>
<dbReference type="NCBIfam" id="NF001903">
    <property type="entry name" value="PRK00654.2-2"/>
    <property type="match status" value="1"/>
</dbReference>
<dbReference type="PANTHER" id="PTHR45825:SF11">
    <property type="entry name" value="ALPHA AMYLASE DOMAIN-CONTAINING PROTEIN"/>
    <property type="match status" value="1"/>
</dbReference>
<dbReference type="PANTHER" id="PTHR45825">
    <property type="entry name" value="GRANULE-BOUND STARCH SYNTHASE 1, CHLOROPLASTIC/AMYLOPLASTIC"/>
    <property type="match status" value="1"/>
</dbReference>
<dbReference type="Pfam" id="PF08323">
    <property type="entry name" value="Glyco_transf_5"/>
    <property type="match status" value="1"/>
</dbReference>
<dbReference type="Pfam" id="PF00534">
    <property type="entry name" value="Glycos_transf_1"/>
    <property type="match status" value="1"/>
</dbReference>
<dbReference type="SUPFAM" id="SSF53756">
    <property type="entry name" value="UDP-Glycosyltransferase/glycogen phosphorylase"/>
    <property type="match status" value="1"/>
</dbReference>
<accession>Q6LKA1</accession>
<protein>
    <recommendedName>
        <fullName evidence="1">Glycogen synthase</fullName>
        <ecNumber evidence="1">2.4.1.21</ecNumber>
    </recommendedName>
    <alternativeName>
        <fullName evidence="1">Starch [bacterial glycogen] synthase</fullName>
    </alternativeName>
</protein>
<sequence>MATKKTSLTKHPLKILFVSSEVEGFAKTGGLADVAKSLPAALKKMGHDVRIVMPFYQTINGKDNAVAILSTELLVESQPFAVSYQVMQLDEGNVPVYALDAPQYYDRPELYAENNQAYADNGERFTFLSAASLDLCEKLGFQPDVIHCNDWHTGLIPFLLKTRYAESDFFAKSKSVITIHNAVFKGVFNYDQYSLIPELIQRRYINAEMDPSHISMLKAGVAYADKVNAVSPNYASELLTHLGSHGMEADFQNRAKDLYGIINGCDYDDWNPETDVYIKQKFKANKVSLARGKKACRRDLQKQVNLPEVDVPVYGMVCRLTEQKGLHYLIPVLEDFLLNDVQVVIVGTGDPTLASALRDISEQHSDKFAFVETYSNPLAHCVEAGVDFFMMPSEFEPCGLNQMYSLAYGTLPIVRSVGGLKDTVIDYDQTPQVATGFIYDTPTPEALLIKLQRSLLLYCQRPQEFKRLQQNAMACKFNWDESAEQYLDMYLGGEQSLVNEICNDKVDA</sequence>
<gene>
    <name evidence="1" type="primary">glgA</name>
    <name type="ordered locus">PBPRB0406</name>
</gene>
<keyword id="KW-0320">Glycogen biosynthesis</keyword>
<keyword id="KW-0328">Glycosyltransferase</keyword>
<keyword id="KW-1185">Reference proteome</keyword>
<keyword id="KW-0808">Transferase</keyword>
<organism>
    <name type="scientific">Photobacterium profundum (strain SS9)</name>
    <dbReference type="NCBI Taxonomy" id="298386"/>
    <lineage>
        <taxon>Bacteria</taxon>
        <taxon>Pseudomonadati</taxon>
        <taxon>Pseudomonadota</taxon>
        <taxon>Gammaproteobacteria</taxon>
        <taxon>Vibrionales</taxon>
        <taxon>Vibrionaceae</taxon>
        <taxon>Photobacterium</taxon>
    </lineage>
</organism>
<feature type="chain" id="PRO_0000230253" description="Glycogen synthase">
    <location>
        <begin position="1"/>
        <end position="508"/>
    </location>
</feature>
<feature type="binding site" evidence="1">
    <location>
        <position position="27"/>
    </location>
    <ligand>
        <name>ADP-alpha-D-glucose</name>
        <dbReference type="ChEBI" id="CHEBI:57498"/>
    </ligand>
</feature>